<proteinExistence type="inferred from homology"/>
<gene>
    <name type="ordered locus">NWMN_0885</name>
</gene>
<evidence type="ECO:0000255" key="1">
    <source>
        <dbReference type="HAMAP-Rule" id="MF_01444"/>
    </source>
</evidence>
<protein>
    <recommendedName>
        <fullName evidence="1">Putative phosphoesterase NWMN_0885</fullName>
        <ecNumber evidence="1">3.1.-.-</ecNumber>
    </recommendedName>
</protein>
<comment type="similarity">
    <text evidence="1">Belongs to the 2H phosphoesterase superfamily. YjcG family.</text>
</comment>
<dbReference type="EC" id="3.1.-.-" evidence="1"/>
<dbReference type="EMBL" id="AP009351">
    <property type="protein sequence ID" value="BAF67157.1"/>
    <property type="molecule type" value="Genomic_DNA"/>
</dbReference>
<dbReference type="RefSeq" id="WP_000600392.1">
    <property type="nucleotide sequence ID" value="NZ_JBBIAE010000002.1"/>
</dbReference>
<dbReference type="SMR" id="A6QFM5"/>
<dbReference type="KEGG" id="sae:NWMN_0885"/>
<dbReference type="HOGENOM" id="CLU_132020_0_0_9"/>
<dbReference type="Proteomes" id="UP000006386">
    <property type="component" value="Chromosome"/>
</dbReference>
<dbReference type="GO" id="GO:0016788">
    <property type="term" value="F:hydrolase activity, acting on ester bonds"/>
    <property type="evidence" value="ECO:0007669"/>
    <property type="project" value="UniProtKB-UniRule"/>
</dbReference>
<dbReference type="Gene3D" id="3.90.1140.10">
    <property type="entry name" value="Cyclic phosphodiesterase"/>
    <property type="match status" value="1"/>
</dbReference>
<dbReference type="HAMAP" id="MF_01444">
    <property type="entry name" value="2H_phosphoesterase_YjcG"/>
    <property type="match status" value="1"/>
</dbReference>
<dbReference type="InterPro" id="IPR050580">
    <property type="entry name" value="2H_phosphoesterase_YjcG-like"/>
</dbReference>
<dbReference type="InterPro" id="IPR009097">
    <property type="entry name" value="Cyclic_Pdiesterase"/>
</dbReference>
<dbReference type="InterPro" id="IPR022932">
    <property type="entry name" value="YjcG"/>
</dbReference>
<dbReference type="NCBIfam" id="NF010223">
    <property type="entry name" value="PRK13679.1"/>
    <property type="match status" value="1"/>
</dbReference>
<dbReference type="PANTHER" id="PTHR40037:SF1">
    <property type="entry name" value="PHOSPHOESTERASE SAOUHSC_00951-RELATED"/>
    <property type="match status" value="1"/>
</dbReference>
<dbReference type="PANTHER" id="PTHR40037">
    <property type="entry name" value="PHOSPHOESTERASE YJCG-RELATED"/>
    <property type="match status" value="1"/>
</dbReference>
<dbReference type="Pfam" id="PF13563">
    <property type="entry name" value="2_5_RNA_ligase2"/>
    <property type="match status" value="1"/>
</dbReference>
<dbReference type="SUPFAM" id="SSF55144">
    <property type="entry name" value="LigT-like"/>
    <property type="match status" value="1"/>
</dbReference>
<keyword id="KW-0378">Hydrolase</keyword>
<accession>A6QFM5</accession>
<name>Y885_STAAE</name>
<sequence>MILGLALIPSKSFQEAVDSYRKRYDKQYSRIKPHVTIKAPFEIKDGDLDSVIEQVRARINGIPAVEVHATKASSFKPTNNVIYFKVAKTDDLEELFNRFNGEDFYGEAEHVFVPHFTIAQGLSSQEFEDIFGQVALAGVDHKEIIDELTLLRFDDDEDKWKVIETFKLA</sequence>
<organism>
    <name type="scientific">Staphylococcus aureus (strain Newman)</name>
    <dbReference type="NCBI Taxonomy" id="426430"/>
    <lineage>
        <taxon>Bacteria</taxon>
        <taxon>Bacillati</taxon>
        <taxon>Bacillota</taxon>
        <taxon>Bacilli</taxon>
        <taxon>Bacillales</taxon>
        <taxon>Staphylococcaceae</taxon>
        <taxon>Staphylococcus</taxon>
    </lineage>
</organism>
<reference key="1">
    <citation type="journal article" date="2008" name="J. Bacteriol.">
        <title>Genome sequence of Staphylococcus aureus strain Newman and comparative analysis of staphylococcal genomes: polymorphism and evolution of two major pathogenicity islands.</title>
        <authorList>
            <person name="Baba T."/>
            <person name="Bae T."/>
            <person name="Schneewind O."/>
            <person name="Takeuchi F."/>
            <person name="Hiramatsu K."/>
        </authorList>
    </citation>
    <scope>NUCLEOTIDE SEQUENCE [LARGE SCALE GENOMIC DNA]</scope>
    <source>
        <strain>Newman</strain>
    </source>
</reference>
<feature type="chain" id="PRO_1000073520" description="Putative phosphoesterase NWMN_0885">
    <location>
        <begin position="1"/>
        <end position="169"/>
    </location>
</feature>
<feature type="short sequence motif" description="HXTX 1" evidence="1">
    <location>
        <begin position="34"/>
        <end position="37"/>
    </location>
</feature>
<feature type="short sequence motif" description="HXTX 2" evidence="1">
    <location>
        <begin position="115"/>
        <end position="118"/>
    </location>
</feature>
<feature type="active site" description="Proton donor" evidence="1">
    <location>
        <position position="34"/>
    </location>
</feature>
<feature type="active site" description="Proton acceptor" evidence="1">
    <location>
        <position position="115"/>
    </location>
</feature>